<comment type="function">
    <text evidence="3">Sodium-independent anion exchanger which mediates the electroneutral exchange of chloride for bicarbonate ions across the cell membrane (By similarity). Plays an important role in osteoclast differentiation and function (By similarity). Regulates bone resorption and calpain-dependent actin cytoskeleton organization in osteoclasts via anion exchange-dependent control of pH (By similarity). Essential for intracellular pH regulation in CD8(+) T-cells upon CD3 stimulation, modulating CD8(+) T-cell response (By similarity).</text>
</comment>
<comment type="catalytic activity">
    <reaction evidence="3">
        <text>hydrogencarbonate(in) + chloride(out) = hydrogencarbonate(out) + chloride(in)</text>
        <dbReference type="Rhea" id="RHEA:72363"/>
        <dbReference type="ChEBI" id="CHEBI:17544"/>
        <dbReference type="ChEBI" id="CHEBI:17996"/>
    </reaction>
</comment>
<comment type="subcellular location">
    <subcellularLocation>
        <location evidence="2">Apical cell membrane</location>
        <topology evidence="4">Multi-pass membrane protein</topology>
    </subcellularLocation>
    <subcellularLocation>
        <location evidence="2">Basolateral cell membrane</location>
        <topology evidence="4">Multi-pass membrane protein</topology>
    </subcellularLocation>
</comment>
<comment type="tissue specificity">
    <text evidence="6">Expressed in the cochlea (at protein level).</text>
</comment>
<comment type="similarity">
    <text evidence="7">Belongs to the anion exchanger (TC 2.A.31) family.</text>
</comment>
<gene>
    <name type="primary">SLC4A2</name>
    <name type="synonym">AE2</name>
</gene>
<name>B3A2_CAVPO</name>
<sequence length="1238" mass="137360">MSGTPRRPASGADSFHKPEPEIVGPGTPGFPEQEEDDLHRTLGVERFEEILQEAGSRGGEELGRSYGEEDFEYHRQSSHHIHHPLSTHLPPDARRRKTPQGQVRKPRRRPGATPAGETPTIEEGEEDEDETSEAEGPVSHTDPSPASTPTSVQFFLQEDEGTDRKAERTSPSPPAQLPHQEAAPQATKKAQPDALVEEAIMVSGGTAGGDDGGASGRPLSKAQPGHRSYNLQERRRIGSMTGVEQALLPRVPTDESEAQTLATADLDLMKSHRFEDVPGVRRHLVRKNAKGSSQSSREGREPGPTPRTRPRAPHKPHEVFVELNELLLDKNQEPQWRETARWIKFEEDVEEETERWGKPHVASLSFRSLLELRRTLAHGAVLLDLDQQTLPGVAHQVVEQMVISDQIKAEDRANVLRALLLKHSHPSDEKEFSFPRNISAGSLGSLLGHHHTQGAESDPHVTEPLIGGVPETRLEVERERELPPPAPPAGITRSKSKHELKLLEKIPENAEATVVLVGCVEFLSRPTMAFVRLREAVELDAVLEVPVPVRFLFLLLGPSSANMDYHEIGRSISTLMSDKQFHEAAYLADEREDLLTAINAFLDCSVVLPPSEVQGEELLRSVAHFQRQMLKKREEQGRLLPPGVGLEPKSAQEKAFLQMVEAVGAVEDDDPLRRTGRPFGGLIRDVKRRYPHYLSDFRDALDPQCLAAVIFIYFAALSPAITFGGLLGEKTHDLIGVSELIMSTALQGVTFCLLGAQPLLVIGFSGPLLVFEEAFYSFCRSNELEYLVGRVWIGFWLVLSALLMVALEGSFLVRFGSRFTQEIFAFLISLIFIYETFYKLVKIFQEHPLHGCLASNSSEADGGKNTTWTEAAPTPGHGNTSSAEQAGVERPQGQPNTALLSLVLMAGTFFIAFFLRKFKNSRFFPGRIRRVIGDFGVPIAILIMVLVDYSIQDTYTQKLSVPSGFSVTAPEKRGWIINPLGEEEPFPVWMMVASLLPAILVFILIFMETQITTLIISKKERMLQKGSGFHLDLLLIVAMGGICALFGLLWLAAATVRSVTHANALTVMSKAVAPGDKPKIQEVKEQRVTGLLVALLVGLSLVIGDLLRQIPLAVLFGIFLYMGVTSLNGIQFYERLHLLLMPPKHHPDVMYVKKVRTMRMHLFKALQLLCLALLWAVMSTAASLAFPFILILTVPLRMVVLTRIFTEREMKCLDANEAEPVFDEREGVDEYNEMPMPV</sequence>
<keyword id="KW-0039">Anion exchange</keyword>
<keyword id="KW-0050">Antiport</keyword>
<keyword id="KW-1003">Cell membrane</keyword>
<keyword id="KW-0325">Glycoprotein</keyword>
<keyword id="KW-0406">Ion transport</keyword>
<keyword id="KW-0449">Lipoprotein</keyword>
<keyword id="KW-0472">Membrane</keyword>
<keyword id="KW-0488">Methylation</keyword>
<keyword id="KW-0564">Palmitate</keyword>
<keyword id="KW-0597">Phosphoprotein</keyword>
<keyword id="KW-1185">Reference proteome</keyword>
<keyword id="KW-0812">Transmembrane</keyword>
<keyword id="KW-1133">Transmembrane helix</keyword>
<keyword id="KW-0813">Transport</keyword>
<reference key="1">
    <citation type="journal article" date="1998" name="Biochim. Biophys. Acta">
        <title>The guinea pig cochlear AE2 anion exchanger: cDNA cloning and in situ localization within the cochlea.</title>
        <authorList>
            <person name="Mhatre A.N."/>
            <person name="Charachon G."/>
            <person name="Alper A.L."/>
            <person name="Lalwani A.K."/>
        </authorList>
    </citation>
    <scope>NUCLEOTIDE SEQUENCE [MRNA]</scope>
    <scope>TISSUE SPECIFICITY</scope>
    <source>
        <strain>NIH 2</strain>
        <tissue>Organ of Corti</tissue>
    </source>
</reference>
<evidence type="ECO:0000250" key="1"/>
<evidence type="ECO:0000250" key="2">
    <source>
        <dbReference type="UniProtKB" id="P04920"/>
    </source>
</evidence>
<evidence type="ECO:0000250" key="3">
    <source>
        <dbReference type="UniProtKB" id="P13808"/>
    </source>
</evidence>
<evidence type="ECO:0000255" key="4"/>
<evidence type="ECO:0000256" key="5">
    <source>
        <dbReference type="SAM" id="MobiDB-lite"/>
    </source>
</evidence>
<evidence type="ECO:0000269" key="6">
    <source>
    </source>
</evidence>
<evidence type="ECO:0000305" key="7"/>
<feature type="chain" id="PRO_0000079214" description="Anion exchange protein 2">
    <location>
        <begin position="1"/>
        <end position="1238"/>
    </location>
</feature>
<feature type="topological domain" description="Cytoplasmic" evidence="4">
    <location>
        <begin position="1"/>
        <end position="704"/>
    </location>
</feature>
<feature type="transmembrane region" description="Helical" evidence="4">
    <location>
        <begin position="705"/>
        <end position="728"/>
    </location>
</feature>
<feature type="transmembrane region" description="Helical" evidence="4">
    <location>
        <begin position="734"/>
        <end position="771"/>
    </location>
</feature>
<feature type="transmembrane region" description="Helical" evidence="4">
    <location>
        <begin position="791"/>
        <end position="813"/>
    </location>
</feature>
<feature type="transmembrane region" description="Helical" evidence="4">
    <location>
        <begin position="823"/>
        <end position="844"/>
    </location>
</feature>
<feature type="topological domain" description="Extracellular" evidence="4">
    <location>
        <begin position="845"/>
        <end position="897"/>
    </location>
</feature>
<feature type="transmembrane region" description="Helical" evidence="4">
    <location>
        <begin position="898"/>
        <end position="915"/>
    </location>
</feature>
<feature type="topological domain" description="Cytoplasmic" evidence="4">
    <location>
        <begin position="916"/>
        <end position="930"/>
    </location>
</feature>
<feature type="transmembrane region" description="Helical" evidence="4">
    <location>
        <begin position="931"/>
        <end position="951"/>
    </location>
</feature>
<feature type="transmembrane region" description="Helical" evidence="4">
    <location>
        <begin position="985"/>
        <end position="1007"/>
    </location>
</feature>
<feature type="transmembrane region" description="Helical" evidence="4">
    <location>
        <begin position="1033"/>
        <end position="1054"/>
    </location>
</feature>
<feature type="transmembrane region" description="Helical" evidence="4">
    <location>
        <begin position="1088"/>
        <end position="1133"/>
    </location>
</feature>
<feature type="transmembrane region" description="Helical" evidence="4">
    <location>
        <begin position="1160"/>
        <end position="1196"/>
    </location>
</feature>
<feature type="region of interest" description="Disordered" evidence="5">
    <location>
        <begin position="1"/>
        <end position="238"/>
    </location>
</feature>
<feature type="region of interest" description="Disordered" evidence="5">
    <location>
        <begin position="277"/>
        <end position="315"/>
    </location>
</feature>
<feature type="region of interest" description="Disordered" evidence="5">
    <location>
        <begin position="445"/>
        <end position="466"/>
    </location>
</feature>
<feature type="region of interest" description="Membrane (anion exchange)">
    <location>
        <begin position="705"/>
        <end position="1238"/>
    </location>
</feature>
<feature type="region of interest" description="Disordered" evidence="5">
    <location>
        <begin position="858"/>
        <end position="892"/>
    </location>
</feature>
<feature type="compositionally biased region" description="Basic and acidic residues" evidence="5">
    <location>
        <begin position="37"/>
        <end position="49"/>
    </location>
</feature>
<feature type="compositionally biased region" description="Basic and acidic residues" evidence="5">
    <location>
        <begin position="58"/>
        <end position="75"/>
    </location>
</feature>
<feature type="compositionally biased region" description="Basic residues" evidence="5">
    <location>
        <begin position="76"/>
        <end position="85"/>
    </location>
</feature>
<feature type="compositionally biased region" description="Basic residues" evidence="5">
    <location>
        <begin position="94"/>
        <end position="110"/>
    </location>
</feature>
<feature type="compositionally biased region" description="Acidic residues" evidence="5">
    <location>
        <begin position="120"/>
        <end position="133"/>
    </location>
</feature>
<feature type="compositionally biased region" description="Polar residues" evidence="5">
    <location>
        <begin position="141"/>
        <end position="154"/>
    </location>
</feature>
<feature type="compositionally biased region" description="Gly residues" evidence="5">
    <location>
        <begin position="205"/>
        <end position="215"/>
    </location>
</feature>
<feature type="compositionally biased region" description="Basic residues" evidence="5">
    <location>
        <begin position="280"/>
        <end position="289"/>
    </location>
</feature>
<feature type="compositionally biased region" description="Polar residues" evidence="5">
    <location>
        <begin position="858"/>
        <end position="869"/>
    </location>
</feature>
<feature type="modified residue" description="Phosphoserine" evidence="2">
    <location>
        <position position="132"/>
    </location>
</feature>
<feature type="modified residue" description="Phosphoserine" evidence="2">
    <location>
        <position position="144"/>
    </location>
</feature>
<feature type="modified residue" description="Phosphoserine" evidence="3">
    <location>
        <position position="170"/>
    </location>
</feature>
<feature type="modified residue" description="Phosphoserine" evidence="3">
    <location>
        <position position="172"/>
    </location>
</feature>
<feature type="modified residue" description="Phosphoserine" evidence="2">
    <location>
        <position position="239"/>
    </location>
</feature>
<feature type="modified residue" description="Phosphothreonine" evidence="3">
    <location>
        <position position="253"/>
    </location>
</feature>
<feature type="modified residue" description="N6-methyllysine" evidence="2">
    <location>
        <position position="270"/>
    </location>
</feature>
<feature type="modified residue" description="Phosphoserine" evidence="2">
    <location>
        <position position="439"/>
    </location>
</feature>
<feature type="lipid moiety-binding region" description="S-palmitoyl cysteine" evidence="1">
    <location>
        <position position="1170"/>
    </location>
</feature>
<feature type="glycosylation site" description="N-linked (GlcNAc...) asparagine" evidence="4">
    <location>
        <position position="856"/>
    </location>
</feature>
<feature type="glycosylation site" description="N-linked (GlcNAc...) asparagine" evidence="4">
    <location>
        <position position="865"/>
    </location>
</feature>
<feature type="glycosylation site" description="N-linked (GlcNAc...) asparagine" evidence="4">
    <location>
        <position position="879"/>
    </location>
</feature>
<accession>Q9Z0S8</accession>
<protein>
    <recommendedName>
        <fullName>Anion exchange protein 2</fullName>
        <shortName>AE 2</shortName>
        <shortName>Anion exchanger 2</shortName>
    </recommendedName>
    <alternativeName>
        <fullName>Non-erythroid band 3-like protein</fullName>
    </alternativeName>
    <alternativeName>
        <fullName>Solute carrier family 4 member 2</fullName>
    </alternativeName>
</protein>
<proteinExistence type="evidence at protein level"/>
<dbReference type="EMBL" id="AF121253">
    <property type="protein sequence ID" value="AAD19700.1"/>
    <property type="molecule type" value="mRNA"/>
</dbReference>
<dbReference type="RefSeq" id="NP_001166488.1">
    <property type="nucleotide sequence ID" value="NM_001173017.1"/>
</dbReference>
<dbReference type="SMR" id="Q9Z0S8"/>
<dbReference type="FunCoup" id="Q9Z0S8">
    <property type="interactions" value="540"/>
</dbReference>
<dbReference type="STRING" id="10141.ENSCPOP00000029737"/>
<dbReference type="GlyCosmos" id="Q9Z0S8">
    <property type="glycosylation" value="3 sites, No reported glycans"/>
</dbReference>
<dbReference type="GeneID" id="100135618"/>
<dbReference type="KEGG" id="cpoc:100135618"/>
<dbReference type="CTD" id="6522"/>
<dbReference type="eggNOG" id="KOG1172">
    <property type="taxonomic scope" value="Eukaryota"/>
</dbReference>
<dbReference type="InParanoid" id="Q9Z0S8"/>
<dbReference type="OrthoDB" id="1735926at2759"/>
<dbReference type="Proteomes" id="UP000005447">
    <property type="component" value="Unassembled WGS sequence"/>
</dbReference>
<dbReference type="GO" id="GO:0016324">
    <property type="term" value="C:apical plasma membrane"/>
    <property type="evidence" value="ECO:0007669"/>
    <property type="project" value="UniProtKB-SubCell"/>
</dbReference>
<dbReference type="GO" id="GO:0016323">
    <property type="term" value="C:basolateral plasma membrane"/>
    <property type="evidence" value="ECO:0000250"/>
    <property type="project" value="UniProtKB"/>
</dbReference>
<dbReference type="GO" id="GO:0140900">
    <property type="term" value="F:chloride:bicarbonate antiporter activity"/>
    <property type="evidence" value="ECO:0000250"/>
    <property type="project" value="UniProtKB"/>
</dbReference>
<dbReference type="GO" id="GO:0043377">
    <property type="term" value="P:negative regulation of CD8-positive, alpha-beta T cell differentiation"/>
    <property type="evidence" value="ECO:0000250"/>
    <property type="project" value="UniProtKB"/>
</dbReference>
<dbReference type="GO" id="GO:2000565">
    <property type="term" value="P:negative regulation of CD8-positive, alpha-beta T cell proliferation"/>
    <property type="evidence" value="ECO:0000250"/>
    <property type="project" value="UniProtKB"/>
</dbReference>
<dbReference type="GO" id="GO:0030316">
    <property type="term" value="P:osteoclast differentiation"/>
    <property type="evidence" value="ECO:0000250"/>
    <property type="project" value="UniProtKB"/>
</dbReference>
<dbReference type="GO" id="GO:0032956">
    <property type="term" value="P:regulation of actin cytoskeleton organization"/>
    <property type="evidence" value="ECO:0000250"/>
    <property type="project" value="UniProtKB"/>
</dbReference>
<dbReference type="GO" id="GO:0045124">
    <property type="term" value="P:regulation of bone resorption"/>
    <property type="evidence" value="ECO:0000250"/>
    <property type="project" value="UniProtKB"/>
</dbReference>
<dbReference type="GO" id="GO:0051453">
    <property type="term" value="P:regulation of intracellular pH"/>
    <property type="evidence" value="ECO:0007669"/>
    <property type="project" value="TreeGrafter"/>
</dbReference>
<dbReference type="FunFam" id="1.10.287.570:FF:000001">
    <property type="entry name" value="Anion exchange protein"/>
    <property type="match status" value="1"/>
</dbReference>
<dbReference type="FunFam" id="3.40.930.10:FF:000004">
    <property type="entry name" value="Anion exchange protein"/>
    <property type="match status" value="1"/>
</dbReference>
<dbReference type="Gene3D" id="1.10.287.570">
    <property type="entry name" value="Helical hairpin bin"/>
    <property type="match status" value="1"/>
</dbReference>
<dbReference type="Gene3D" id="3.40.930.10">
    <property type="entry name" value="Mannitol-specific EII, Chain A"/>
    <property type="match status" value="1"/>
</dbReference>
<dbReference type="InterPro" id="IPR001717">
    <property type="entry name" value="Anion_exchange"/>
</dbReference>
<dbReference type="InterPro" id="IPR002978">
    <property type="entry name" value="Anion_exchange_2"/>
</dbReference>
<dbReference type="InterPro" id="IPR018241">
    <property type="entry name" value="Anion_exchange_CS"/>
</dbReference>
<dbReference type="InterPro" id="IPR013769">
    <property type="entry name" value="Band3_cytoplasmic_dom"/>
</dbReference>
<dbReference type="InterPro" id="IPR011531">
    <property type="entry name" value="HCO3_transpt-like_TM_dom"/>
</dbReference>
<dbReference type="InterPro" id="IPR003020">
    <property type="entry name" value="HCO3_transpt_euk"/>
</dbReference>
<dbReference type="InterPro" id="IPR016152">
    <property type="entry name" value="PTrfase/Anion_transptr"/>
</dbReference>
<dbReference type="NCBIfam" id="TIGR00834">
    <property type="entry name" value="ae"/>
    <property type="match status" value="1"/>
</dbReference>
<dbReference type="PANTHER" id="PTHR11453">
    <property type="entry name" value="ANION EXCHANGE PROTEIN"/>
    <property type="match status" value="1"/>
</dbReference>
<dbReference type="PANTHER" id="PTHR11453:SF14">
    <property type="entry name" value="ANION EXCHANGE PROTEIN 2"/>
    <property type="match status" value="1"/>
</dbReference>
<dbReference type="Pfam" id="PF07565">
    <property type="entry name" value="Band_3_cyto"/>
    <property type="match status" value="1"/>
</dbReference>
<dbReference type="Pfam" id="PF00955">
    <property type="entry name" value="HCO3_cotransp"/>
    <property type="match status" value="1"/>
</dbReference>
<dbReference type="PRINTS" id="PR00165">
    <property type="entry name" value="ANIONEXCHNGR"/>
</dbReference>
<dbReference type="PRINTS" id="PR01188">
    <property type="entry name" value="ANIONEXHNGR2"/>
</dbReference>
<dbReference type="PRINTS" id="PR01231">
    <property type="entry name" value="HCO3TRNSPORT"/>
</dbReference>
<dbReference type="SUPFAM" id="SSF55804">
    <property type="entry name" value="Phoshotransferase/anion transport protein"/>
    <property type="match status" value="1"/>
</dbReference>
<dbReference type="PROSITE" id="PS00219">
    <property type="entry name" value="ANION_EXCHANGER_1"/>
    <property type="match status" value="1"/>
</dbReference>
<dbReference type="PROSITE" id="PS00220">
    <property type="entry name" value="ANION_EXCHANGER_2"/>
    <property type="match status" value="1"/>
</dbReference>
<organism>
    <name type="scientific">Cavia porcellus</name>
    <name type="common">Guinea pig</name>
    <dbReference type="NCBI Taxonomy" id="10141"/>
    <lineage>
        <taxon>Eukaryota</taxon>
        <taxon>Metazoa</taxon>
        <taxon>Chordata</taxon>
        <taxon>Craniata</taxon>
        <taxon>Vertebrata</taxon>
        <taxon>Euteleostomi</taxon>
        <taxon>Mammalia</taxon>
        <taxon>Eutheria</taxon>
        <taxon>Euarchontoglires</taxon>
        <taxon>Glires</taxon>
        <taxon>Rodentia</taxon>
        <taxon>Hystricomorpha</taxon>
        <taxon>Caviidae</taxon>
        <taxon>Cavia</taxon>
    </lineage>
</organism>